<gene>
    <name evidence="1" type="primary">rsmG</name>
    <name type="ordered locus">BRE_175</name>
</gene>
<name>RSMG_BORRA</name>
<keyword id="KW-0963">Cytoplasm</keyword>
<keyword id="KW-0489">Methyltransferase</keyword>
<keyword id="KW-0698">rRNA processing</keyword>
<keyword id="KW-0949">S-adenosyl-L-methionine</keyword>
<keyword id="KW-0808">Transferase</keyword>
<reference key="1">
    <citation type="journal article" date="2008" name="PLoS Genet.">
        <title>The genome of Borrelia recurrentis, the agent of deadly louse-borne relapsing fever, is a degraded subset of tick-borne Borrelia duttonii.</title>
        <authorList>
            <person name="Lescot M."/>
            <person name="Audic S."/>
            <person name="Robert C."/>
            <person name="Nguyen T.T."/>
            <person name="Blanc G."/>
            <person name="Cutler S.J."/>
            <person name="Wincker P."/>
            <person name="Couloux A."/>
            <person name="Claverie J.-M."/>
            <person name="Raoult D."/>
            <person name="Drancourt M."/>
        </authorList>
    </citation>
    <scope>NUCLEOTIDE SEQUENCE [LARGE SCALE GENOMIC DNA]</scope>
    <source>
        <strain>A1</strain>
    </source>
</reference>
<dbReference type="EC" id="2.1.1.-" evidence="1"/>
<dbReference type="EMBL" id="CP000993">
    <property type="protein sequence ID" value="ACH94430.1"/>
    <property type="molecule type" value="Genomic_DNA"/>
</dbReference>
<dbReference type="RefSeq" id="WP_012538712.1">
    <property type="nucleotide sequence ID" value="NC_011244.1"/>
</dbReference>
<dbReference type="SMR" id="B5RQZ6"/>
<dbReference type="KEGG" id="bre:BRE_175"/>
<dbReference type="HOGENOM" id="CLU_065341_2_0_12"/>
<dbReference type="Proteomes" id="UP000000612">
    <property type="component" value="Chromosome"/>
</dbReference>
<dbReference type="GO" id="GO:0005829">
    <property type="term" value="C:cytosol"/>
    <property type="evidence" value="ECO:0007669"/>
    <property type="project" value="TreeGrafter"/>
</dbReference>
<dbReference type="GO" id="GO:0070043">
    <property type="term" value="F:rRNA (guanine-N7-)-methyltransferase activity"/>
    <property type="evidence" value="ECO:0007669"/>
    <property type="project" value="UniProtKB-UniRule"/>
</dbReference>
<dbReference type="Gene3D" id="3.40.50.150">
    <property type="entry name" value="Vaccinia Virus protein VP39"/>
    <property type="match status" value="1"/>
</dbReference>
<dbReference type="HAMAP" id="MF_00074">
    <property type="entry name" value="16SrRNA_methyltr_G"/>
    <property type="match status" value="1"/>
</dbReference>
<dbReference type="InterPro" id="IPR003682">
    <property type="entry name" value="rRNA_ssu_MeTfrase_G"/>
</dbReference>
<dbReference type="InterPro" id="IPR029063">
    <property type="entry name" value="SAM-dependent_MTases_sf"/>
</dbReference>
<dbReference type="NCBIfam" id="TIGR00138">
    <property type="entry name" value="rsmG_gidB"/>
    <property type="match status" value="1"/>
</dbReference>
<dbReference type="PANTHER" id="PTHR31760">
    <property type="entry name" value="S-ADENOSYL-L-METHIONINE-DEPENDENT METHYLTRANSFERASES SUPERFAMILY PROTEIN"/>
    <property type="match status" value="1"/>
</dbReference>
<dbReference type="PANTHER" id="PTHR31760:SF0">
    <property type="entry name" value="S-ADENOSYL-L-METHIONINE-DEPENDENT METHYLTRANSFERASES SUPERFAMILY PROTEIN"/>
    <property type="match status" value="1"/>
</dbReference>
<dbReference type="Pfam" id="PF02527">
    <property type="entry name" value="GidB"/>
    <property type="match status" value="1"/>
</dbReference>
<dbReference type="PIRSF" id="PIRSF003078">
    <property type="entry name" value="GidB"/>
    <property type="match status" value="1"/>
</dbReference>
<dbReference type="SUPFAM" id="SSF53335">
    <property type="entry name" value="S-adenosyl-L-methionine-dependent methyltransferases"/>
    <property type="match status" value="1"/>
</dbReference>
<protein>
    <recommendedName>
        <fullName evidence="1">Ribosomal RNA small subunit methyltransferase G</fullName>
        <ecNumber evidence="1">2.1.1.-</ecNumber>
    </recommendedName>
    <alternativeName>
        <fullName evidence="1">16S rRNA 7-methylguanosine methyltransferase</fullName>
        <shortName evidence="1">16S rRNA m7G methyltransferase</shortName>
    </alternativeName>
</protein>
<organism>
    <name type="scientific">Borrelia recurrentis (strain A1)</name>
    <dbReference type="NCBI Taxonomy" id="412418"/>
    <lineage>
        <taxon>Bacteria</taxon>
        <taxon>Pseudomonadati</taxon>
        <taxon>Spirochaetota</taxon>
        <taxon>Spirochaetia</taxon>
        <taxon>Spirochaetales</taxon>
        <taxon>Borreliaceae</taxon>
        <taxon>Borrelia</taxon>
    </lineage>
</organism>
<evidence type="ECO:0000255" key="1">
    <source>
        <dbReference type="HAMAP-Rule" id="MF_00074"/>
    </source>
</evidence>
<accession>B5RQZ6</accession>
<comment type="function">
    <text evidence="1">Specifically methylates the N7 position of a guanine in 16S rRNA.</text>
</comment>
<comment type="subcellular location">
    <subcellularLocation>
        <location evidence="1">Cytoplasm</location>
    </subcellularLocation>
</comment>
<comment type="similarity">
    <text evidence="1">Belongs to the methyltransferase superfamily. RNA methyltransferase RsmG family.</text>
</comment>
<feature type="chain" id="PRO_1000092614" description="Ribosomal RNA small subunit methyltransferase G">
    <location>
        <begin position="1"/>
        <end position="210"/>
    </location>
</feature>
<feature type="binding site" evidence="1">
    <location>
        <position position="77"/>
    </location>
    <ligand>
        <name>S-adenosyl-L-methionine</name>
        <dbReference type="ChEBI" id="CHEBI:59789"/>
    </ligand>
</feature>
<feature type="binding site" evidence="1">
    <location>
        <position position="82"/>
    </location>
    <ligand>
        <name>S-adenosyl-L-methionine</name>
        <dbReference type="ChEBI" id="CHEBI:59789"/>
    </ligand>
</feature>
<feature type="binding site" evidence="1">
    <location>
        <begin position="100"/>
        <end position="102"/>
    </location>
    <ligand>
        <name>S-adenosyl-L-methionine</name>
        <dbReference type="ChEBI" id="CHEBI:59789"/>
    </ligand>
</feature>
<feature type="binding site" evidence="1">
    <location>
        <begin position="128"/>
        <end position="129"/>
    </location>
    <ligand>
        <name>S-adenosyl-L-methionine</name>
        <dbReference type="ChEBI" id="CHEBI:59789"/>
    </ligand>
</feature>
<feature type="binding site" evidence="1">
    <location>
        <position position="141"/>
    </location>
    <ligand>
        <name>S-adenosyl-L-methionine</name>
        <dbReference type="ChEBI" id="CHEBI:59789"/>
    </ligand>
</feature>
<proteinExistence type="inferred from homology"/>
<sequence>MMTNFKFALKNLKVNFTSENIDKLRFYIEKVLLFSDRFNLVSNNVRNFDAMLLHALDSVSGLPIVKDKNLRQVLDVGSGAGFPGIVLALFDRCRKYVLLERSNKKAIFLKMISLELGLENVEVLEHNVEEEQNKYEFITIRAFGDIRKYANILGSILKSGGLIMAYKGKFDKVEFEMSYVKNLFDKVEIKSSEVISDKERYFLLLYDYKC</sequence>